<proteinExistence type="evidence at protein level"/>
<gene>
    <name type="primary">LHB</name>
</gene>
<feature type="chain" id="PRO_0000149040" description="Lutropin subunit beta">
    <location>
        <begin position="1"/>
        <end position="118"/>
    </location>
</feature>
<feature type="glycosylation site" description="N-linked (GlcNAc...) asparagine">
    <location>
        <position position="13"/>
    </location>
</feature>
<feature type="disulfide bond" evidence="1">
    <location>
        <begin position="9"/>
        <end position="57"/>
    </location>
</feature>
<feature type="disulfide bond" evidence="1">
    <location>
        <begin position="23"/>
        <end position="72"/>
    </location>
</feature>
<feature type="disulfide bond" evidence="1">
    <location>
        <begin position="26"/>
        <end position="110"/>
    </location>
</feature>
<feature type="disulfide bond" evidence="1">
    <location>
        <begin position="34"/>
        <end position="88"/>
    </location>
</feature>
<feature type="disulfide bond" evidence="1">
    <location>
        <begin position="38"/>
        <end position="90"/>
    </location>
</feature>
<feature type="disulfide bond" evidence="1">
    <location>
        <begin position="93"/>
        <end position="100"/>
    </location>
</feature>
<organism>
    <name type="scientific">Balaenoptera acutorostrata</name>
    <name type="common">Common minke whale</name>
    <name type="synonym">Balaena rostrata</name>
    <dbReference type="NCBI Taxonomy" id="9767"/>
    <lineage>
        <taxon>Eukaryota</taxon>
        <taxon>Metazoa</taxon>
        <taxon>Chordata</taxon>
        <taxon>Craniata</taxon>
        <taxon>Vertebrata</taxon>
        <taxon>Euteleostomi</taxon>
        <taxon>Mammalia</taxon>
        <taxon>Eutheria</taxon>
        <taxon>Laurasiatheria</taxon>
        <taxon>Artiodactyla</taxon>
        <taxon>Whippomorpha</taxon>
        <taxon>Cetacea</taxon>
        <taxon>Mysticeti</taxon>
        <taxon>Balaenopteridae</taxon>
        <taxon>Balaenoptera</taxon>
    </lineage>
</organism>
<evidence type="ECO:0000250" key="1"/>
<evidence type="ECO:0000305" key="2"/>
<reference key="1">
    <citation type="journal article" date="1985" name="Biokhimiia">
        <title>Amino acid sequence of reduced and carboxymethylated alpha- and beta-subunits of the little picked whale luteinizing hormone.</title>
        <authorList>
            <person name="Karasev V.S."/>
            <person name="Pankov Y.A."/>
        </authorList>
    </citation>
    <scope>PROTEIN SEQUENCE</scope>
</reference>
<name>LSHB_BALAC</name>
<accession>P33088</accession>
<protein>
    <recommendedName>
        <fullName>Lutropin subunit beta</fullName>
    </recommendedName>
    <alternativeName>
        <fullName>Luteinizing hormone subunit beta</fullName>
        <shortName>LH-B</shortName>
        <shortName>LSH-B</shortName>
        <shortName>LSH-beta</shortName>
    </alternativeName>
    <alternativeName>
        <fullName>Lutropin beta chain</fullName>
    </alternativeName>
</protein>
<sequence length="118" mass="12415">PRGPLRPLCRPINATLAAZBZACPVCITFTTSICAGYCPSMVRVLPAALPPVPZPVCTYRZLRFASIRLPGCPPGVBPMVSFPVALSCHCGPCRLSSSBCGPGRAZPLACBRSPRPGL</sequence>
<comment type="function">
    <text>Promotes spermatogenesis and ovulation by stimulating the testes and ovaries to synthesize steroids.</text>
</comment>
<comment type="subunit">
    <text>Heterodimer of a common alpha chain and a unique beta chain which confers biological specificity to thyrotropin, lutropin, follitropin and gonadotropin.</text>
</comment>
<comment type="subcellular location">
    <subcellularLocation>
        <location>Secreted</location>
    </subcellularLocation>
</comment>
<comment type="similarity">
    <text evidence="2">Belongs to the glycoprotein hormones subunit beta family.</text>
</comment>
<keyword id="KW-0903">Direct protein sequencing</keyword>
<keyword id="KW-1015">Disulfide bond</keyword>
<keyword id="KW-0325">Glycoprotein</keyword>
<keyword id="KW-0372">Hormone</keyword>
<keyword id="KW-0964">Secreted</keyword>
<dbReference type="PIR" id="PN0139">
    <property type="entry name" value="PN0139"/>
</dbReference>
<dbReference type="GlyCosmos" id="P33088">
    <property type="glycosylation" value="1 site, No reported glycans"/>
</dbReference>
<dbReference type="GO" id="GO:0005737">
    <property type="term" value="C:cytoplasm"/>
    <property type="evidence" value="ECO:0007669"/>
    <property type="project" value="TreeGrafter"/>
</dbReference>
<dbReference type="GO" id="GO:0005615">
    <property type="term" value="C:extracellular space"/>
    <property type="evidence" value="ECO:0007669"/>
    <property type="project" value="TreeGrafter"/>
</dbReference>
<dbReference type="GO" id="GO:0005179">
    <property type="term" value="F:hormone activity"/>
    <property type="evidence" value="ECO:0007669"/>
    <property type="project" value="UniProtKB-KW"/>
</dbReference>
<dbReference type="GO" id="GO:0007186">
    <property type="term" value="P:G protein-coupled receptor signaling pathway"/>
    <property type="evidence" value="ECO:0007669"/>
    <property type="project" value="TreeGrafter"/>
</dbReference>
<dbReference type="CDD" id="cd00069">
    <property type="entry name" value="GHB_like"/>
    <property type="match status" value="1"/>
</dbReference>
<dbReference type="FunFam" id="2.10.90.10:FF:000007">
    <property type="entry name" value="Luteinizing hormone beta subunit"/>
    <property type="match status" value="1"/>
</dbReference>
<dbReference type="Gene3D" id="2.10.90.10">
    <property type="entry name" value="Cystine-knot cytokines"/>
    <property type="match status" value="1"/>
</dbReference>
<dbReference type="InterPro" id="IPR029034">
    <property type="entry name" value="Cystine-knot_cytokine"/>
</dbReference>
<dbReference type="InterPro" id="IPR006208">
    <property type="entry name" value="Glyco_hormone_CN"/>
</dbReference>
<dbReference type="InterPro" id="IPR001545">
    <property type="entry name" value="Gonadotropin_bsu"/>
</dbReference>
<dbReference type="InterPro" id="IPR018245">
    <property type="entry name" value="Gonadotropin_bsu_CS"/>
</dbReference>
<dbReference type="PANTHER" id="PTHR11515">
    <property type="entry name" value="GLYCOPROTEIN HORMONE BETA CHAIN"/>
    <property type="match status" value="1"/>
</dbReference>
<dbReference type="PANTHER" id="PTHR11515:SF11">
    <property type="entry name" value="LUTROPIN SUBUNIT BETA"/>
    <property type="match status" value="1"/>
</dbReference>
<dbReference type="Pfam" id="PF00007">
    <property type="entry name" value="Cys_knot"/>
    <property type="match status" value="1"/>
</dbReference>
<dbReference type="SMART" id="SM00068">
    <property type="entry name" value="GHB"/>
    <property type="match status" value="1"/>
</dbReference>
<dbReference type="SUPFAM" id="SSF57501">
    <property type="entry name" value="Cystine-knot cytokines"/>
    <property type="match status" value="1"/>
</dbReference>
<dbReference type="PROSITE" id="PS00261">
    <property type="entry name" value="GLYCO_HORMONE_BETA_1"/>
    <property type="match status" value="1"/>
</dbReference>
<dbReference type="PROSITE" id="PS00689">
    <property type="entry name" value="GLYCO_HORMONE_BETA_2"/>
    <property type="match status" value="1"/>
</dbReference>